<proteinExistence type="evidence at transcript level"/>
<keyword id="KW-0068">Autocatalytic cleavage</keyword>
<keyword id="KW-0106">Calcium</keyword>
<keyword id="KW-0109">Calcium transport</keyword>
<keyword id="KW-0868">Chloride</keyword>
<keyword id="KW-0325">Glycoprotein</keyword>
<keyword id="KW-0378">Hydrolase</keyword>
<keyword id="KW-0406">Ion transport</keyword>
<keyword id="KW-0479">Metal-binding</keyword>
<keyword id="KW-0482">Metalloprotease</keyword>
<keyword id="KW-0645">Protease</keyword>
<keyword id="KW-1185">Reference proteome</keyword>
<keyword id="KW-0964">Secreted</keyword>
<keyword id="KW-0732">Signal</keyword>
<keyword id="KW-0813">Transport</keyword>
<keyword id="KW-0862">Zinc</keyword>
<evidence type="ECO:0000250" key="1"/>
<evidence type="ECO:0000250" key="2">
    <source>
        <dbReference type="UniProtKB" id="A8K7I4"/>
    </source>
</evidence>
<evidence type="ECO:0000255" key="3"/>
<evidence type="ECO:0000255" key="4">
    <source>
        <dbReference type="PROSITE-ProRule" id="PRU00219"/>
    </source>
</evidence>
<evidence type="ECO:0000269" key="5">
    <source>
    </source>
</evidence>
<evidence type="ECO:0000269" key="6">
    <source>
    </source>
</evidence>
<evidence type="ECO:0000269" key="7">
    <source>
    </source>
</evidence>
<evidence type="ECO:0000269" key="8">
    <source>
    </source>
</evidence>
<evidence type="ECO:0000305" key="9"/>
<comment type="function">
    <text evidence="5 6 7 8">May be involved in mediating calcium-activated chloride conductance. May play critical roles in goblet cell metaplasia, mucus hypersecretion, cystic fibrosis and AHR. May be involved in the regulation of mucus production and/or secretion by goblet cells. Involved in the regulation of tissue inflammation in the innate immune response. May play a role as a tumor suppressor. Induces MUC5AC. Induces a cAMP-dependent chloride conductance possibly through effects on CFTR in colon carcinoma cells.</text>
</comment>
<comment type="subcellular location">
    <subcellularLocation>
        <location evidence="1">Secreted</location>
        <location evidence="1">Extracellular space</location>
    </subcellularLocation>
</comment>
<comment type="tissue specificity">
    <text evidence="5">Expressed in ileum, trachea, and the major salivary glands. In ileum, expressed to the crypt and villus epithelia, whereas in trachea expressed in both surface epithelium and submucosal glands.</text>
</comment>
<comment type="domain">
    <text evidence="2">The metalloprotease region is responsible for autoproteolytic processing. It can also cross-cleave other CLCA substrates.</text>
</comment>
<comment type="PTM">
    <text evidence="1">Glycosylated.</text>
</comment>
<comment type="PTM">
    <text evidence="2">The translation product is autoproteolytically cleaved by the metalloprotease domain in the endoplasmic reticulum into a N-terminal and a C-terminal products that remain physically associated with each other. The cleavage is necessary for calcium-activated chloride channel (CaCC) activation activity.</text>
</comment>
<comment type="similarity">
    <text evidence="9">Belongs to the CLCR family.</text>
</comment>
<dbReference type="EC" id="3.4.-.-" evidence="2"/>
<dbReference type="EMBL" id="AF095584">
    <property type="protein sequence ID" value="AAF00077.1"/>
    <property type="molecule type" value="mRNA"/>
</dbReference>
<dbReference type="RefSeq" id="NP_999313.1">
    <property type="nucleotide sequence ID" value="NM_214148.1"/>
</dbReference>
<dbReference type="SMR" id="Q9TUB5"/>
<dbReference type="FunCoup" id="Q9TUB5">
    <property type="interactions" value="326"/>
</dbReference>
<dbReference type="STRING" id="9823.ENSSSCP00000037372"/>
<dbReference type="MEROPS" id="M87.001"/>
<dbReference type="GlyCosmos" id="Q9TUB5">
    <property type="glycosylation" value="6 sites, No reported glycans"/>
</dbReference>
<dbReference type="GlyGen" id="Q9TUB5">
    <property type="glycosylation" value="6 sites"/>
</dbReference>
<dbReference type="PaxDb" id="9823-ENSSSCP00000007392"/>
<dbReference type="PeptideAtlas" id="Q9TUB5"/>
<dbReference type="GeneID" id="397284"/>
<dbReference type="KEGG" id="ssc:397284"/>
<dbReference type="CTD" id="1179"/>
<dbReference type="eggNOG" id="ENOG502QRRD">
    <property type="taxonomic scope" value="Eukaryota"/>
</dbReference>
<dbReference type="InParanoid" id="Q9TUB5"/>
<dbReference type="OrthoDB" id="687730at2759"/>
<dbReference type="Proteomes" id="UP000008227">
    <property type="component" value="Unplaced"/>
</dbReference>
<dbReference type="Proteomes" id="UP000314985">
    <property type="component" value="Unplaced"/>
</dbReference>
<dbReference type="Proteomes" id="UP000694570">
    <property type="component" value="Unplaced"/>
</dbReference>
<dbReference type="Proteomes" id="UP000694571">
    <property type="component" value="Unplaced"/>
</dbReference>
<dbReference type="Proteomes" id="UP000694720">
    <property type="component" value="Unplaced"/>
</dbReference>
<dbReference type="Proteomes" id="UP000694722">
    <property type="component" value="Unplaced"/>
</dbReference>
<dbReference type="Proteomes" id="UP000694723">
    <property type="component" value="Unplaced"/>
</dbReference>
<dbReference type="Proteomes" id="UP000694724">
    <property type="component" value="Unplaced"/>
</dbReference>
<dbReference type="Proteomes" id="UP000694725">
    <property type="component" value="Unplaced"/>
</dbReference>
<dbReference type="Proteomes" id="UP000694726">
    <property type="component" value="Unplaced"/>
</dbReference>
<dbReference type="Proteomes" id="UP000694727">
    <property type="component" value="Unplaced"/>
</dbReference>
<dbReference type="Proteomes" id="UP000694728">
    <property type="component" value="Unplaced"/>
</dbReference>
<dbReference type="GO" id="GO:0005576">
    <property type="term" value="C:extracellular region"/>
    <property type="evidence" value="ECO:0007669"/>
    <property type="project" value="UniProtKB-SubCell"/>
</dbReference>
<dbReference type="GO" id="GO:0005886">
    <property type="term" value="C:plasma membrane"/>
    <property type="evidence" value="ECO:0000318"/>
    <property type="project" value="GO_Central"/>
</dbReference>
<dbReference type="GO" id="GO:0005229">
    <property type="term" value="F:intracellularly calcium-gated chloride channel activity"/>
    <property type="evidence" value="ECO:0000318"/>
    <property type="project" value="GO_Central"/>
</dbReference>
<dbReference type="GO" id="GO:0046872">
    <property type="term" value="F:metal ion binding"/>
    <property type="evidence" value="ECO:0007669"/>
    <property type="project" value="UniProtKB-KW"/>
</dbReference>
<dbReference type="GO" id="GO:0008237">
    <property type="term" value="F:metallopeptidase activity"/>
    <property type="evidence" value="ECO:0007669"/>
    <property type="project" value="UniProtKB-KW"/>
</dbReference>
<dbReference type="GO" id="GO:0006816">
    <property type="term" value="P:calcium ion transport"/>
    <property type="evidence" value="ECO:0007669"/>
    <property type="project" value="UniProtKB-KW"/>
</dbReference>
<dbReference type="GO" id="GO:0006508">
    <property type="term" value="P:proteolysis"/>
    <property type="evidence" value="ECO:0007669"/>
    <property type="project" value="UniProtKB-KW"/>
</dbReference>
<dbReference type="CDD" id="cd00198">
    <property type="entry name" value="vWFA"/>
    <property type="match status" value="1"/>
</dbReference>
<dbReference type="FunFam" id="2.60.40.10:FF:001134">
    <property type="entry name" value="Calcium-activated chloride channel regulator 1"/>
    <property type="match status" value="1"/>
</dbReference>
<dbReference type="FunFam" id="3.40.50.410:FF:000034">
    <property type="entry name" value="calcium-activated chloride channel regulator 1"/>
    <property type="match status" value="1"/>
</dbReference>
<dbReference type="Gene3D" id="2.60.40.10">
    <property type="entry name" value="Immunoglobulins"/>
    <property type="match status" value="1"/>
</dbReference>
<dbReference type="Gene3D" id="3.40.50.410">
    <property type="entry name" value="von Willebrand factor, type A domain"/>
    <property type="match status" value="1"/>
</dbReference>
<dbReference type="InterPro" id="IPR004727">
    <property type="entry name" value="CLCA_chordata"/>
</dbReference>
<dbReference type="InterPro" id="IPR013642">
    <property type="entry name" value="CLCA_N"/>
</dbReference>
<dbReference type="InterPro" id="IPR051266">
    <property type="entry name" value="CLCR"/>
</dbReference>
<dbReference type="InterPro" id="IPR013783">
    <property type="entry name" value="Ig-like_fold"/>
</dbReference>
<dbReference type="InterPro" id="IPR002035">
    <property type="entry name" value="VWF_A"/>
</dbReference>
<dbReference type="InterPro" id="IPR036465">
    <property type="entry name" value="vWFA_dom_sf"/>
</dbReference>
<dbReference type="NCBIfam" id="NF041940">
    <property type="entry name" value="choice_anch_X"/>
    <property type="match status" value="1"/>
</dbReference>
<dbReference type="NCBIfam" id="TIGR00868">
    <property type="entry name" value="hCaCC"/>
    <property type="match status" value="1"/>
</dbReference>
<dbReference type="PANTHER" id="PTHR10579">
    <property type="entry name" value="CALCIUM-ACTIVATED CHLORIDE CHANNEL REGULATOR"/>
    <property type="match status" value="1"/>
</dbReference>
<dbReference type="PANTHER" id="PTHR10579:SF52">
    <property type="entry name" value="CALCIUM-ACTIVATED CHLORIDE CHANNEL REGULATOR 1"/>
    <property type="match status" value="1"/>
</dbReference>
<dbReference type="Pfam" id="PF08434">
    <property type="entry name" value="CLCA"/>
    <property type="match status" value="1"/>
</dbReference>
<dbReference type="Pfam" id="PF13519">
    <property type="entry name" value="VWA_2"/>
    <property type="match status" value="1"/>
</dbReference>
<dbReference type="SMART" id="SM00327">
    <property type="entry name" value="VWA"/>
    <property type="match status" value="1"/>
</dbReference>
<dbReference type="SUPFAM" id="SSF53300">
    <property type="entry name" value="vWA-like"/>
    <property type="match status" value="1"/>
</dbReference>
<dbReference type="PROSITE" id="PS50234">
    <property type="entry name" value="VWFA"/>
    <property type="match status" value="1"/>
</dbReference>
<feature type="signal peptide" evidence="3">
    <location>
        <begin position="1"/>
        <end position="21"/>
    </location>
</feature>
<feature type="chain" id="PRO_0000333693" description="Calcium-activated chloride channel regulator 1">
    <location>
        <begin position="22"/>
        <end position="917"/>
    </location>
</feature>
<feature type="domain" description="VWFA" evidence="4">
    <location>
        <begin position="306"/>
        <end position="475"/>
    </location>
</feature>
<feature type="region of interest" description="Metalloprotease domain" evidence="2">
    <location>
        <begin position="46"/>
        <end position="199"/>
    </location>
</feature>
<feature type="active site" evidence="2">
    <location>
        <position position="157"/>
    </location>
</feature>
<feature type="binding site" evidence="2">
    <location>
        <position position="156"/>
    </location>
    <ligand>
        <name>Zn(2+)</name>
        <dbReference type="ChEBI" id="CHEBI:29105"/>
        <note>catalytic</note>
    </ligand>
</feature>
<feature type="binding site" evidence="2">
    <location>
        <position position="160"/>
    </location>
    <ligand>
        <name>Zn(2+)</name>
        <dbReference type="ChEBI" id="CHEBI:29105"/>
        <note>catalytic</note>
    </ligand>
</feature>
<feature type="binding site" evidence="2">
    <location>
        <position position="167"/>
    </location>
    <ligand>
        <name>Zn(2+)</name>
        <dbReference type="ChEBI" id="CHEBI:29105"/>
        <note>catalytic</note>
    </ligand>
</feature>
<feature type="site" description="Cleavage; by autolysis" evidence="2">
    <location>
        <begin position="696"/>
        <end position="697"/>
    </location>
</feature>
<feature type="glycosylation site" description="N-linked (GlcNAc...) asparagine" evidence="3">
    <location>
        <position position="503"/>
    </location>
</feature>
<feature type="glycosylation site" description="N-linked (GlcNAc...) asparagine" evidence="3">
    <location>
        <position position="772"/>
    </location>
</feature>
<feature type="glycosylation site" description="N-linked (GlcNAc...) asparagine" evidence="3">
    <location>
        <position position="806"/>
    </location>
</feature>
<feature type="glycosylation site" description="N-linked (GlcNAc...) asparagine" evidence="3">
    <location>
        <position position="812"/>
    </location>
</feature>
<feature type="glycosylation site" description="N-linked (GlcNAc...) asparagine" evidence="3">
    <location>
        <position position="838"/>
    </location>
</feature>
<feature type="glycosylation site" description="N-linked (GlcNAc...) asparagine" evidence="3">
    <location>
        <position position="893"/>
    </location>
</feature>
<name>CLCA1_PIG</name>
<reference key="1">
    <citation type="journal article" date="2000" name="Physiol. Genomics">
        <title>Cloning a chloride conductance mediator from the apical membrane of porcine ileal enterocytes.</title>
        <authorList>
            <person name="Gaspar K.J."/>
            <person name="Racette K.J."/>
            <person name="Gordon J.R."/>
            <person name="Loewen M.E."/>
            <person name="Forsyth G.W."/>
        </authorList>
    </citation>
    <scope>NUCLEOTIDE SEQUENCE [MRNA]</scope>
    <scope>FUNCTION</scope>
    <scope>TISSUE SPECIFICITY</scope>
    <source>
        <tissue>Ileal mucosa</tissue>
    </source>
</reference>
<reference key="2">
    <citation type="journal article" date="2002" name="Am. J. Physiol.">
        <title>The calcium-dependent chloride conductance mediator pCLCA1.</title>
        <authorList>
            <person name="Loewen M.E."/>
            <person name="Gabriel S.E."/>
            <person name="Forsyth G.W."/>
        </authorList>
    </citation>
    <scope>FUNCTION</scope>
</reference>
<reference key="3">
    <citation type="journal article" date="2002" name="Biochem. Biophys. Res. Commun.">
        <title>pCLCA1 becomes a cAMP-dependent chloride conductance mediator in Caco-2 cells.</title>
        <authorList>
            <person name="Loewen M.E."/>
            <person name="Bekar L.K."/>
            <person name="Gabriel S.E."/>
            <person name="Walz W."/>
            <person name="Forsyth G.W."/>
        </authorList>
    </citation>
    <scope>FUNCTION</scope>
</reference>
<reference key="4">
    <citation type="journal article" date="2004" name="Am. J. Physiol.">
        <title>pCLCA1 lacks inherent chloride channel activity in an epithelial colon carcinoma cell line.</title>
        <authorList>
            <person name="Loewen M.E."/>
            <person name="Bekar L.K."/>
            <person name="Walz W."/>
            <person name="Forsyth G.W."/>
            <person name="Gabriel S.E."/>
        </authorList>
    </citation>
    <scope>FUNCTION</scope>
</reference>
<organism>
    <name type="scientific">Sus scrofa</name>
    <name type="common">Pig</name>
    <dbReference type="NCBI Taxonomy" id="9823"/>
    <lineage>
        <taxon>Eukaryota</taxon>
        <taxon>Metazoa</taxon>
        <taxon>Chordata</taxon>
        <taxon>Craniata</taxon>
        <taxon>Vertebrata</taxon>
        <taxon>Euteleostomi</taxon>
        <taxon>Mammalia</taxon>
        <taxon>Eutheria</taxon>
        <taxon>Laurasiatheria</taxon>
        <taxon>Artiodactyla</taxon>
        <taxon>Suina</taxon>
        <taxon>Suidae</taxon>
        <taxon>Sus</taxon>
    </lineage>
</organism>
<sequence length="917" mass="100736">MGSFRSSLFILVLHLLEGAQSNSLIQLNGNGYEGIVIAIDPNVPEDERLIQNIKDMVTKASPYLFEATEKRFYFKNVAILIPASWKAKPEYVKPKLETYKNADVVVTEPNPPENDGPYTEQMGNCGEKGEKIYFTPDFVAGKKVLQYGPQGRVFVHEWAHLRWGVFNEYNNEQKFYLSNKKEQPVICSAAIRGTNVLPQCQGGSCVTKPCRADRVTGLFQKECEFIPDPQQSEKASIMFAQSIDTVVEFCKEKNHNKEAPNDQNQKCNLRSTWEVIQDSEDFKKTTPMTTQPPAPTFSLLQIGQRIVCLVLDKSGSMTVGGRLKRLNQAGKLFLLQTVEQGAWVGMVAFDSAAYVKSELVQINSAAERDALARSLPTAASGGTSICSGLRSAFTVIKKKYPTDGSEIVLLTDGEDNTISACFPEVKQNGAIIHTVALGPSAAKELEELSQMTGGLQTYASDQAENNGLIDAFGALSSGNRAASQRSIQLESQGLTLQNNEWMNGTVVVDSTVGKDTLFLITLERKFLSPIPFFGVPSGRSQDSFLVGKHNKMAYFQVPGTAKVGMWKYSLQASSQTLTLTVSSRRSSATLPPVTVTSKMNKDTGKFPSPMVVYTKIHQGTLPILRAKVTALIESENGKTVTLELLDNGAGADATKNDGIYSRYFTAYDANGRYSVKVWALGGVNTPRRRAPPLWSGAMYIRGWIENGEIKWNPPRPDINKDDLQGKQVCFSRTASGGSFVASDVPKSPIPDLFPPCKITDLKAGIQGDNLINLTWTAPGDDYDHGRADRYIIRISTNILDLRDKFNDSVQVNTTDLIPKEANSEEVFVFKPEGIPFTNGTDLFIAVQAVDKTNLKSEISNIAQVSLFLPPEAPPETPPETPAPSLPCPEIQVNSTIPGIHILKIMWKWLGELQLSIA</sequence>
<gene>
    <name type="primary">CLCA1</name>
    <name type="synonym">AECC</name>
</gene>
<protein>
    <recommendedName>
        <fullName>Calcium-activated chloride channel regulator 1</fullName>
        <ecNumber evidence="2">3.4.-.-</ecNumber>
    </recommendedName>
    <alternativeName>
        <fullName>Calcium-activated chloride channel family member 1</fullName>
    </alternativeName>
    <alternativeName>
        <fullName>pCLCA1</fullName>
    </alternativeName>
</protein>
<accession>Q9TUB5</accession>